<dbReference type="EC" id="7.1.1.-"/>
<dbReference type="EMBL" id="X04465">
    <property type="protein sequence ID" value="CAA28129.1"/>
    <property type="molecule type" value="Genomic_DNA"/>
</dbReference>
<dbReference type="PIR" id="A00453">
    <property type="entry name" value="DELVN5"/>
</dbReference>
<dbReference type="RefSeq" id="NP_039343.1">
    <property type="nucleotide sequence ID" value="NC_001319.1"/>
</dbReference>
<dbReference type="SMR" id="P06264"/>
<dbReference type="GeneID" id="2702575"/>
<dbReference type="GO" id="GO:0009535">
    <property type="term" value="C:chloroplast thylakoid membrane"/>
    <property type="evidence" value="ECO:0007669"/>
    <property type="project" value="UniProtKB-SubCell"/>
</dbReference>
<dbReference type="GO" id="GO:0008137">
    <property type="term" value="F:NADH dehydrogenase (ubiquinone) activity"/>
    <property type="evidence" value="ECO:0007669"/>
    <property type="project" value="InterPro"/>
</dbReference>
<dbReference type="GO" id="GO:0048038">
    <property type="term" value="F:quinone binding"/>
    <property type="evidence" value="ECO:0007669"/>
    <property type="project" value="UniProtKB-KW"/>
</dbReference>
<dbReference type="GO" id="GO:0042773">
    <property type="term" value="P:ATP synthesis coupled electron transport"/>
    <property type="evidence" value="ECO:0007669"/>
    <property type="project" value="InterPro"/>
</dbReference>
<dbReference type="Gene3D" id="1.20.5.2700">
    <property type="match status" value="1"/>
</dbReference>
<dbReference type="InterPro" id="IPR002128">
    <property type="entry name" value="NADH_UbQ_OxRdtase_chlpt_su5_C"/>
</dbReference>
<dbReference type="InterPro" id="IPR018393">
    <property type="entry name" value="NADHpl_OxRdtase_5_subgr"/>
</dbReference>
<dbReference type="InterPro" id="IPR001750">
    <property type="entry name" value="ND/Mrp_TM"/>
</dbReference>
<dbReference type="InterPro" id="IPR003945">
    <property type="entry name" value="NU5C-like"/>
</dbReference>
<dbReference type="InterPro" id="IPR001516">
    <property type="entry name" value="Proton_antipo_N"/>
</dbReference>
<dbReference type="NCBIfam" id="TIGR01974">
    <property type="entry name" value="NDH_I_L"/>
    <property type="match status" value="1"/>
</dbReference>
<dbReference type="NCBIfam" id="NF005141">
    <property type="entry name" value="PRK06590.1"/>
    <property type="match status" value="1"/>
</dbReference>
<dbReference type="PANTHER" id="PTHR42829">
    <property type="entry name" value="NADH-UBIQUINONE OXIDOREDUCTASE CHAIN 5"/>
    <property type="match status" value="1"/>
</dbReference>
<dbReference type="PANTHER" id="PTHR42829:SF2">
    <property type="entry name" value="NADH-UBIQUINONE OXIDOREDUCTASE CHAIN 5"/>
    <property type="match status" value="1"/>
</dbReference>
<dbReference type="Pfam" id="PF01010">
    <property type="entry name" value="Proton_antipo_C"/>
    <property type="match status" value="1"/>
</dbReference>
<dbReference type="Pfam" id="PF00361">
    <property type="entry name" value="Proton_antipo_M"/>
    <property type="match status" value="1"/>
</dbReference>
<dbReference type="Pfam" id="PF00662">
    <property type="entry name" value="Proton_antipo_N"/>
    <property type="match status" value="1"/>
</dbReference>
<dbReference type="PRINTS" id="PR01434">
    <property type="entry name" value="NADHDHGNASE5"/>
</dbReference>
<dbReference type="PRINTS" id="PR01435">
    <property type="entry name" value="NPOXDRDTASE5"/>
</dbReference>
<protein>
    <recommendedName>
        <fullName>NAD(P)H-quinone oxidoreductase subunit 5, chloroplastic</fullName>
        <ecNumber>7.1.1.-</ecNumber>
    </recommendedName>
    <alternativeName>
        <fullName>NAD(P)H dehydrogenase subunit 5</fullName>
    </alternativeName>
    <alternativeName>
        <fullName>NADH-plastoquinone oxidoreductase subunit 5</fullName>
    </alternativeName>
</protein>
<sequence>MELIFQNVWFVPLFPFLASILLGIGLFFFPNSIKKFRRLSSFISIMFLNIAMLLSFHFFWQQITGSPIHRYLWSWVLYKNFVLEIGYLLDPLTSIMLVLVTTVAVMVMIYSDSYMFYDEGYIKFFCYLSLFTASMLGLVLSPNLIQVYIFWELVGMCSYLLIGFWFTRPSAANACQKAFVTNRIGDFGLLLGILGFYWITGSFDFQQLSKRFFELLSYNQINLVFATLCALFLFLGPVAKSAQFPLHIWLPDAMEGPTPISALIHAATMVAAGIFLVARMFPLFQMLPFVMSIISWTGAITALLGATIALAQKDLKKGLAYSTMSQLGYMMLALGIGSYKAGLFHLITHAYSKALLFLGSGSVIHSMEPIVGYHPNKSQNMIFMGGLRQYMPITAITFLFGTLSLCGIPPFACFWSKDEILVNSWLHFPILGSIAFFTAGLTAFYMFRIYFLTFEGDFRGHFFDDVKKLSSISIWGSLEFNKEQFKLDKKSTLYPKEANNIMLFPLIILTIPTVFIGFIGILFDENKMNVDSLSYWLTLSINSFNYSNSEKFLEFLFNAIPSVSIAFFGILIAFYLYGPNFSFLKKEKKKLQLKSEIDIVLKSFSNFIYNWSYYRAYIDGFYSSFFIKGLRFLIKIVSFIDRWIIDGIINGIGIFSFFGGESLKYIEGGRISSYLFFIIFCMFLFFLYSYII</sequence>
<keyword id="KW-0150">Chloroplast</keyword>
<keyword id="KW-0472">Membrane</keyword>
<keyword id="KW-0520">NAD</keyword>
<keyword id="KW-0521">NADP</keyword>
<keyword id="KW-0934">Plastid</keyword>
<keyword id="KW-0618">Plastoquinone</keyword>
<keyword id="KW-0874">Quinone</keyword>
<keyword id="KW-0793">Thylakoid</keyword>
<keyword id="KW-1278">Translocase</keyword>
<keyword id="KW-0812">Transmembrane</keyword>
<keyword id="KW-1133">Transmembrane helix</keyword>
<keyword id="KW-0813">Transport</keyword>
<proteinExistence type="inferred from homology"/>
<gene>
    <name type="primary">ndhF</name>
    <name type="synonym">ndh5</name>
</gene>
<evidence type="ECO:0000250" key="1"/>
<evidence type="ECO:0000255" key="2"/>
<evidence type="ECO:0000305" key="3"/>
<accession>P06264</accession>
<feature type="chain" id="PRO_0000118193" description="NAD(P)H-quinone oxidoreductase subunit 5, chloroplastic">
    <location>
        <begin position="1"/>
        <end position="692"/>
    </location>
</feature>
<feature type="transmembrane region" description="Helical" evidence="2">
    <location>
        <begin position="9"/>
        <end position="29"/>
    </location>
</feature>
<feature type="transmembrane region" description="Helical" evidence="2">
    <location>
        <begin position="39"/>
        <end position="59"/>
    </location>
</feature>
<feature type="transmembrane region" description="Helical" evidence="2">
    <location>
        <begin position="89"/>
        <end position="109"/>
    </location>
</feature>
<feature type="transmembrane region" description="Helical" evidence="2">
    <location>
        <begin position="120"/>
        <end position="140"/>
    </location>
</feature>
<feature type="transmembrane region" description="Helical" evidence="2">
    <location>
        <begin position="147"/>
        <end position="167"/>
    </location>
</feature>
<feature type="transmembrane region" description="Helical" evidence="2">
    <location>
        <begin position="184"/>
        <end position="204"/>
    </location>
</feature>
<feature type="transmembrane region" description="Helical" evidence="2">
    <location>
        <begin position="219"/>
        <end position="239"/>
    </location>
</feature>
<feature type="transmembrane region" description="Helical" evidence="2">
    <location>
        <begin position="258"/>
        <end position="278"/>
    </location>
</feature>
<feature type="transmembrane region" description="Helical" evidence="2">
    <location>
        <begin position="289"/>
        <end position="309"/>
    </location>
</feature>
<feature type="transmembrane region" description="Helical" evidence="2">
    <location>
        <begin position="327"/>
        <end position="347"/>
    </location>
</feature>
<feature type="transmembrane region" description="Helical" evidence="2">
    <location>
        <begin position="354"/>
        <end position="374"/>
    </location>
</feature>
<feature type="transmembrane region" description="Helical" evidence="2">
    <location>
        <begin position="395"/>
        <end position="415"/>
    </location>
</feature>
<feature type="transmembrane region" description="Helical" evidence="2">
    <location>
        <begin position="425"/>
        <end position="445"/>
    </location>
</feature>
<feature type="transmembrane region" description="Helical" evidence="2">
    <location>
        <begin position="503"/>
        <end position="523"/>
    </location>
</feature>
<feature type="transmembrane region" description="Helical" evidence="2">
    <location>
        <begin position="555"/>
        <end position="575"/>
    </location>
</feature>
<feature type="transmembrane region" description="Helical" evidence="2">
    <location>
        <begin position="643"/>
        <end position="663"/>
    </location>
</feature>
<feature type="transmembrane region" description="Helical" evidence="2">
    <location>
        <begin position="671"/>
        <end position="691"/>
    </location>
</feature>
<organism>
    <name type="scientific">Marchantia polymorpha</name>
    <name type="common">Common liverwort</name>
    <name type="synonym">Marchantia aquatica</name>
    <dbReference type="NCBI Taxonomy" id="3197"/>
    <lineage>
        <taxon>Eukaryota</taxon>
        <taxon>Viridiplantae</taxon>
        <taxon>Streptophyta</taxon>
        <taxon>Embryophyta</taxon>
        <taxon>Marchantiophyta</taxon>
        <taxon>Marchantiopsida</taxon>
        <taxon>Marchantiidae</taxon>
        <taxon>Marchantiales</taxon>
        <taxon>Marchantiaceae</taxon>
        <taxon>Marchantia</taxon>
    </lineage>
</organism>
<name>NU5C_MARPO</name>
<reference key="1">
    <citation type="journal article" date="1986" name="Nature">
        <title>Chloroplast gene organization deduced from complete sequence of liverwort Marchantia polymorpha chloroplast DNA.</title>
        <authorList>
            <person name="Ohyama K."/>
            <person name="Fukuzawa H."/>
            <person name="Kohchi T."/>
            <person name="Shirai H."/>
            <person name="Sano T."/>
            <person name="Sano S."/>
            <person name="Umesono K."/>
            <person name="Shiki Y."/>
            <person name="Takeuchi M."/>
            <person name="Chang Z."/>
            <person name="Aota S."/>
            <person name="Inokuchi H."/>
            <person name="Ozeki H."/>
        </authorList>
    </citation>
    <scope>NUCLEOTIDE SEQUENCE [LARGE SCALE GENOMIC DNA]</scope>
</reference>
<reference key="2">
    <citation type="journal article" date="1988" name="J. Mol. Biol.">
        <title>Structure and organization of Marchantia polymorpha chloroplast genome. IV. Inverted repeat and small single copy regions.</title>
        <authorList>
            <person name="Kohchi T."/>
            <person name="Shirai H."/>
            <person name="Fukuzawa H."/>
            <person name="Sano T."/>
            <person name="Komano T."/>
            <person name="Umesono K."/>
            <person name="Inokuchi H."/>
            <person name="Ozeki H."/>
            <person name="Ohyama K."/>
        </authorList>
    </citation>
    <scope>NUCLEOTIDE SEQUENCE [GENOMIC DNA]</scope>
</reference>
<comment type="function">
    <text evidence="1">NDH shuttles electrons from NAD(P)H:plastoquinone, via FMN and iron-sulfur (Fe-S) centers, to quinones in the photosynthetic chain and possibly in a chloroplast respiratory chain. The immediate electron acceptor for the enzyme in this species is believed to be plastoquinone. Couples the redox reaction to proton translocation, and thus conserves the redox energy in a proton gradient (By similarity).</text>
</comment>
<comment type="catalytic activity">
    <reaction>
        <text>a plastoquinone + NADH + (n+1) H(+)(in) = a plastoquinol + NAD(+) + n H(+)(out)</text>
        <dbReference type="Rhea" id="RHEA:42608"/>
        <dbReference type="Rhea" id="RHEA-COMP:9561"/>
        <dbReference type="Rhea" id="RHEA-COMP:9562"/>
        <dbReference type="ChEBI" id="CHEBI:15378"/>
        <dbReference type="ChEBI" id="CHEBI:17757"/>
        <dbReference type="ChEBI" id="CHEBI:57540"/>
        <dbReference type="ChEBI" id="CHEBI:57945"/>
        <dbReference type="ChEBI" id="CHEBI:62192"/>
    </reaction>
</comment>
<comment type="catalytic activity">
    <reaction>
        <text>a plastoquinone + NADPH + (n+1) H(+)(in) = a plastoquinol + NADP(+) + n H(+)(out)</text>
        <dbReference type="Rhea" id="RHEA:42612"/>
        <dbReference type="Rhea" id="RHEA-COMP:9561"/>
        <dbReference type="Rhea" id="RHEA-COMP:9562"/>
        <dbReference type="ChEBI" id="CHEBI:15378"/>
        <dbReference type="ChEBI" id="CHEBI:17757"/>
        <dbReference type="ChEBI" id="CHEBI:57783"/>
        <dbReference type="ChEBI" id="CHEBI:58349"/>
        <dbReference type="ChEBI" id="CHEBI:62192"/>
    </reaction>
</comment>
<comment type="subunit">
    <text evidence="1">NDH is composed of at least 16 different subunits, 5 of which are encoded in the nucleus.</text>
</comment>
<comment type="subcellular location">
    <subcellularLocation>
        <location evidence="1">Plastid</location>
        <location evidence="1">Chloroplast thylakoid membrane</location>
        <topology evidence="1">Multi-pass membrane protein</topology>
    </subcellularLocation>
</comment>
<comment type="similarity">
    <text evidence="3">Belongs to the complex I subunit 5 family.</text>
</comment>
<geneLocation type="chloroplast"/>